<evidence type="ECO:0000250" key="1">
    <source>
        <dbReference type="UniProtKB" id="P50389"/>
    </source>
</evidence>
<evidence type="ECO:0000255" key="2">
    <source>
        <dbReference type="HAMAP-Rule" id="MF_01627"/>
    </source>
</evidence>
<proteinExistence type="inferred from homology"/>
<reference key="1">
    <citation type="submission" date="2008-02" db="EMBL/GenBank/DDBJ databases">
        <title>Complete sequence of Haemophilus somnus 2336.</title>
        <authorList>
            <consortium name="US DOE Joint Genome Institute"/>
            <person name="Siddaramappa S."/>
            <person name="Duncan A.J."/>
            <person name="Challacombe J.F."/>
            <person name="Rainey D."/>
            <person name="Gillaspy A.F."/>
            <person name="Carson M."/>
            <person name="Gipson J."/>
            <person name="Gipson M."/>
            <person name="Bruce D."/>
            <person name="Detter J.C."/>
            <person name="Han C.S."/>
            <person name="Land M."/>
            <person name="Tapia R."/>
            <person name="Thompson L.S."/>
            <person name="Orvis J."/>
            <person name="Zaitshik J."/>
            <person name="Barnes G."/>
            <person name="Brettin T.S."/>
            <person name="Dyer D.W."/>
            <person name="Inzana T.J."/>
        </authorList>
    </citation>
    <scope>NUCLEOTIDE SEQUENCE [LARGE SCALE GENOMIC DNA]</scope>
    <source>
        <strain>2336</strain>
    </source>
</reference>
<feature type="chain" id="PRO_1000088104" description="Purine nucleoside phosphorylase DeoD-type">
    <location>
        <begin position="1"/>
        <end position="238"/>
    </location>
</feature>
<feature type="active site" description="Proton donor" evidence="2">
    <location>
        <position position="204"/>
    </location>
</feature>
<feature type="binding site" evidence="1">
    <location>
        <position position="4"/>
    </location>
    <ligand>
        <name>a purine D-ribonucleoside</name>
        <dbReference type="ChEBI" id="CHEBI:142355"/>
        <note>ligand shared between dimeric partners</note>
    </ligand>
</feature>
<feature type="binding site" description="in other chain" evidence="1">
    <location>
        <position position="20"/>
    </location>
    <ligand>
        <name>phosphate</name>
        <dbReference type="ChEBI" id="CHEBI:43474"/>
        <note>ligand shared between dimeric partners</note>
    </ligand>
</feature>
<feature type="binding site" description="in other chain" evidence="1">
    <location>
        <position position="24"/>
    </location>
    <ligand>
        <name>phosphate</name>
        <dbReference type="ChEBI" id="CHEBI:43474"/>
        <note>ligand shared between dimeric partners</note>
    </ligand>
</feature>
<feature type="binding site" evidence="1">
    <location>
        <position position="43"/>
    </location>
    <ligand>
        <name>phosphate</name>
        <dbReference type="ChEBI" id="CHEBI:43474"/>
        <note>ligand shared between dimeric partners</note>
    </ligand>
</feature>
<feature type="binding site" description="in other chain" evidence="1">
    <location>
        <begin position="87"/>
        <end position="90"/>
    </location>
    <ligand>
        <name>phosphate</name>
        <dbReference type="ChEBI" id="CHEBI:43474"/>
        <note>ligand shared between dimeric partners</note>
    </ligand>
</feature>
<feature type="binding site" description="in other chain" evidence="1">
    <location>
        <begin position="179"/>
        <end position="181"/>
    </location>
    <ligand>
        <name>a purine D-ribonucleoside</name>
        <dbReference type="ChEBI" id="CHEBI:142355"/>
        <note>ligand shared between dimeric partners</note>
    </ligand>
</feature>
<feature type="binding site" description="in other chain" evidence="1">
    <location>
        <begin position="203"/>
        <end position="204"/>
    </location>
    <ligand>
        <name>a purine D-ribonucleoside</name>
        <dbReference type="ChEBI" id="CHEBI:142355"/>
        <note>ligand shared between dimeric partners</note>
    </ligand>
</feature>
<feature type="site" description="Important for catalytic activity" evidence="2">
    <location>
        <position position="217"/>
    </location>
</feature>
<name>DEOD_HISS2</name>
<dbReference type="EC" id="2.4.2.1" evidence="2"/>
<dbReference type="EMBL" id="CP000947">
    <property type="protein sequence ID" value="ACA31374.1"/>
    <property type="molecule type" value="Genomic_DNA"/>
</dbReference>
<dbReference type="RefSeq" id="WP_012340740.1">
    <property type="nucleotide sequence ID" value="NC_010519.1"/>
</dbReference>
<dbReference type="SMR" id="B0UVM2"/>
<dbReference type="STRING" id="228400.HSM_0161"/>
<dbReference type="GeneID" id="31486439"/>
<dbReference type="KEGG" id="hsm:HSM_0161"/>
<dbReference type="HOGENOM" id="CLU_068457_2_0_6"/>
<dbReference type="GO" id="GO:0005829">
    <property type="term" value="C:cytosol"/>
    <property type="evidence" value="ECO:0007669"/>
    <property type="project" value="TreeGrafter"/>
</dbReference>
<dbReference type="GO" id="GO:0004731">
    <property type="term" value="F:purine-nucleoside phosphorylase activity"/>
    <property type="evidence" value="ECO:0007669"/>
    <property type="project" value="UniProtKB-UniRule"/>
</dbReference>
<dbReference type="GO" id="GO:0006152">
    <property type="term" value="P:purine nucleoside catabolic process"/>
    <property type="evidence" value="ECO:0007669"/>
    <property type="project" value="TreeGrafter"/>
</dbReference>
<dbReference type="CDD" id="cd09006">
    <property type="entry name" value="PNP_EcPNPI-like"/>
    <property type="match status" value="1"/>
</dbReference>
<dbReference type="FunFam" id="3.40.50.1580:FF:000002">
    <property type="entry name" value="Purine nucleoside phosphorylase DeoD-type"/>
    <property type="match status" value="1"/>
</dbReference>
<dbReference type="Gene3D" id="3.40.50.1580">
    <property type="entry name" value="Nucleoside phosphorylase domain"/>
    <property type="match status" value="1"/>
</dbReference>
<dbReference type="HAMAP" id="MF_01627">
    <property type="entry name" value="Pur_nucleosid_phosp"/>
    <property type="match status" value="1"/>
</dbReference>
<dbReference type="InterPro" id="IPR004402">
    <property type="entry name" value="DeoD-type"/>
</dbReference>
<dbReference type="InterPro" id="IPR018016">
    <property type="entry name" value="Nucleoside_phosphorylase_CS"/>
</dbReference>
<dbReference type="InterPro" id="IPR000845">
    <property type="entry name" value="Nucleoside_phosphorylase_d"/>
</dbReference>
<dbReference type="InterPro" id="IPR035994">
    <property type="entry name" value="Nucleoside_phosphorylase_sf"/>
</dbReference>
<dbReference type="NCBIfam" id="TIGR00107">
    <property type="entry name" value="deoD"/>
    <property type="match status" value="1"/>
</dbReference>
<dbReference type="NCBIfam" id="NF004489">
    <property type="entry name" value="PRK05819.1"/>
    <property type="match status" value="1"/>
</dbReference>
<dbReference type="NCBIfam" id="NF009914">
    <property type="entry name" value="PRK13374.1"/>
    <property type="match status" value="1"/>
</dbReference>
<dbReference type="PANTHER" id="PTHR43691:SF2">
    <property type="entry name" value="PURINE NUCLEOSIDE PHOSPHORYLASE DEOD-TYPE"/>
    <property type="match status" value="1"/>
</dbReference>
<dbReference type="PANTHER" id="PTHR43691">
    <property type="entry name" value="URIDINE PHOSPHORYLASE"/>
    <property type="match status" value="1"/>
</dbReference>
<dbReference type="Pfam" id="PF01048">
    <property type="entry name" value="PNP_UDP_1"/>
    <property type="match status" value="1"/>
</dbReference>
<dbReference type="SUPFAM" id="SSF53167">
    <property type="entry name" value="Purine and uridine phosphorylases"/>
    <property type="match status" value="1"/>
</dbReference>
<dbReference type="PROSITE" id="PS01232">
    <property type="entry name" value="PNP_UDP_1"/>
    <property type="match status" value="1"/>
</dbReference>
<accession>B0UVM2</accession>
<gene>
    <name evidence="2" type="primary">deoD</name>
    <name type="ordered locus">HSM_0161</name>
</gene>
<sequence>MTPHINAPAGAFADVVLMPGDPLRAKYIAETFLENAQEVTNVRNMLGYTGTYKGRKISVMGHGMGIPSCSIYAKELITEYGVKKIIRVGSCGAVNMDVKIRDVIIGLGACTDSKVNRIRFKDNDFAAIADFGMARAAVQAAKNKGIDVKVGNLFSADLFYTPDLEMFDVMEKYGILGVEMEAAGIYGVAAEFKAKALTICTVSDHIRTHEQTSAEERQLTFNEMIEIALESVLLEDSL</sequence>
<comment type="function">
    <text evidence="2">Catalyzes the reversible phosphorolytic breakdown of the N-glycosidic bond in the beta-(deoxy)ribonucleoside molecules, with the formation of the corresponding free purine bases and pentose-1-phosphate.</text>
</comment>
<comment type="catalytic activity">
    <reaction evidence="2">
        <text>a purine D-ribonucleoside + phosphate = a purine nucleobase + alpha-D-ribose 1-phosphate</text>
        <dbReference type="Rhea" id="RHEA:19805"/>
        <dbReference type="ChEBI" id="CHEBI:26386"/>
        <dbReference type="ChEBI" id="CHEBI:43474"/>
        <dbReference type="ChEBI" id="CHEBI:57720"/>
        <dbReference type="ChEBI" id="CHEBI:142355"/>
        <dbReference type="EC" id="2.4.2.1"/>
    </reaction>
</comment>
<comment type="catalytic activity">
    <reaction evidence="2">
        <text>a purine 2'-deoxy-D-ribonucleoside + phosphate = a purine nucleobase + 2-deoxy-alpha-D-ribose 1-phosphate</text>
        <dbReference type="Rhea" id="RHEA:36431"/>
        <dbReference type="ChEBI" id="CHEBI:26386"/>
        <dbReference type="ChEBI" id="CHEBI:43474"/>
        <dbReference type="ChEBI" id="CHEBI:57259"/>
        <dbReference type="ChEBI" id="CHEBI:142361"/>
        <dbReference type="EC" id="2.4.2.1"/>
    </reaction>
</comment>
<comment type="subunit">
    <text evidence="2">Homohexamer; trimer of homodimers.</text>
</comment>
<comment type="similarity">
    <text evidence="2">Belongs to the PNP/UDP phosphorylase family.</text>
</comment>
<organism>
    <name type="scientific">Histophilus somni (strain 2336)</name>
    <name type="common">Haemophilus somnus</name>
    <dbReference type="NCBI Taxonomy" id="228400"/>
    <lineage>
        <taxon>Bacteria</taxon>
        <taxon>Pseudomonadati</taxon>
        <taxon>Pseudomonadota</taxon>
        <taxon>Gammaproteobacteria</taxon>
        <taxon>Pasteurellales</taxon>
        <taxon>Pasteurellaceae</taxon>
        <taxon>Histophilus</taxon>
    </lineage>
</organism>
<protein>
    <recommendedName>
        <fullName evidence="2">Purine nucleoside phosphorylase DeoD-type</fullName>
        <shortName evidence="2">PNP</shortName>
        <ecNumber evidence="2">2.4.2.1</ecNumber>
    </recommendedName>
</protein>
<keyword id="KW-0328">Glycosyltransferase</keyword>
<keyword id="KW-0808">Transferase</keyword>